<comment type="function">
    <text evidence="1">Capsid protein (CA) is the structural component of the virus-like particle (VLP), forming the shell that encapsulates the retrotransposons dimeric RNA genome. The particles are assembled from trimer-clustered units and there are holes in the capsid shells that allow for the diffusion of macromolecules. CA also has nucleocapsid-like chaperone activity, promoting primer tRNA(i)-Met annealing to the multipartite primer-binding site (PBS), dimerization of Ty1 RNA and initiation of reverse transcription (By similarity).</text>
</comment>
<comment type="function">
    <text evidence="1">The aspartyl protease (PR) mediates the proteolytic cleavages of the Gag and Gag-Pol polyproteins after assembly of the VLP.</text>
</comment>
<comment type="function">
    <text evidence="1">Reverse transcriptase/ribonuclease H (RT) is a multifunctional enzyme that catalyzes the conversion of the retro-elements RNA genome into dsDNA within the VLP. The enzyme displays a DNA polymerase activity that can copy either DNA or RNA templates, and a ribonuclease H (RNase H) activity that cleaves the RNA strand of RNA-DNA heteroduplexes during plus-strand synthesis and hydrolyzes RNA primers. The conversion leads to a linear dsDNA copy of the retrotransposon that includes long terminal repeats (LTRs) at both ends (By similarity).</text>
</comment>
<comment type="function">
    <text evidence="1">Integrase (IN) targets the VLP to the nucleus, where a subparticle preintegration complex (PIC) containing at least integrase and the newly synthesized dsDNA copy of the retrotransposon must transit the nuclear membrane. Once in the nucleus, integrase performs the integration of the dsDNA into the host genome (By similarity).</text>
</comment>
<comment type="catalytic activity">
    <reaction>
        <text>DNA(n) + a 2'-deoxyribonucleoside 5'-triphosphate = DNA(n+1) + diphosphate</text>
        <dbReference type="Rhea" id="RHEA:22508"/>
        <dbReference type="Rhea" id="RHEA-COMP:17339"/>
        <dbReference type="Rhea" id="RHEA-COMP:17340"/>
        <dbReference type="ChEBI" id="CHEBI:33019"/>
        <dbReference type="ChEBI" id="CHEBI:61560"/>
        <dbReference type="ChEBI" id="CHEBI:173112"/>
        <dbReference type="EC" id="2.7.7.49"/>
    </reaction>
</comment>
<comment type="catalytic activity">
    <reaction>
        <text>DNA(n) + a 2'-deoxyribonucleoside 5'-triphosphate = DNA(n+1) + diphosphate</text>
        <dbReference type="Rhea" id="RHEA:22508"/>
        <dbReference type="Rhea" id="RHEA-COMP:17339"/>
        <dbReference type="Rhea" id="RHEA-COMP:17340"/>
        <dbReference type="ChEBI" id="CHEBI:33019"/>
        <dbReference type="ChEBI" id="CHEBI:61560"/>
        <dbReference type="ChEBI" id="CHEBI:173112"/>
        <dbReference type="EC" id="2.7.7.7"/>
    </reaction>
</comment>
<comment type="catalytic activity">
    <reaction>
        <text>Endonucleolytic cleavage to 5'-phosphomonoester.</text>
        <dbReference type="EC" id="3.1.26.4"/>
    </reaction>
</comment>
<comment type="subunit">
    <text evidence="1">The capsid protein forms a homotrimer, from which the VLPs are assembled. The protease is a homodimer, whose active site consists of two apposed aspartic acid residues (By similarity).</text>
</comment>
<comment type="subcellular location">
    <subcellularLocation>
        <location>Cytoplasm</location>
    </subcellularLocation>
    <subcellularLocation>
        <location evidence="1">Nucleus</location>
    </subcellularLocation>
</comment>
<comment type="alternative products">
    <event type="ribosomal frameshifting"/>
    <isoform>
        <id>Q12414-1</id>
        <name>Transposon Ty1-PL Gag-Pol polyprotein</name>
        <sequence type="displayed"/>
    </isoform>
    <isoform>
        <id>P0CX73-1</id>
        <name>Transposon Ty1-PL Gag polyprotein</name>
        <sequence type="external"/>
    </isoform>
    <text evidence="1">The Gag-Pol polyprotein is generated by a +1 ribosomal frameshift. The ratio of Gag:Gag-Pol varies between 20:1 and 5:1 (By similarity).</text>
</comment>
<comment type="domain">
    <text evidence="1">The C-terminal RNA-binding region of CA is sufficient for all its nucleocapsid-like chaperone activities.</text>
</comment>
<comment type="domain">
    <text evidence="1">Integrase core domain contains the D-x(n)-D-x(35)-E motif, named for the phylogenetically conserved glutamic acid and aspartic acid residues and the invariant 35 amino acid spacing between the second and third acidic residues. Each acidic residue of the D,D(35)E motif is independently essential for the 3'-processing and strand transfer activities of purified integrase protein (By similarity).</text>
</comment>
<comment type="PTM">
    <text evidence="1">Initially, virus-like particles (VLPs) are composed of the structural unprocessed proteins Gag and Gag-Pol, and also contain the host initiator methionine tRNA (tRNA(i)-Met) which serves as a primer for minus-strand DNA synthesis, and a dimer of genomic Ty RNA. Processing of the polyproteins occurs within the particle and proceeds by an ordered pathway, called maturation. First, the protease (PR) is released by autocatalytic cleavage of the Gag-Pol polyprotein yielding capsid protein p45 and a Pol-p154 precursor protein. This cleavage is a prerequisite for subsequent processing of Pol-p154 at the remaining sites to release the mature structural and catalytic proteins. Maturation takes place prior to the RT reaction and is required to produce transposition-competent VLPs (By similarity).</text>
</comment>
<comment type="miscellaneous">
    <text>Retrotransposons are mobile genetic entities that are able to replicate via an RNA intermediate and a reverse transcription step. In contrast to retroviruses, retrotransposons are non-infectious, lack an envelope and remain intracellular. Ty1 retrotransposons belong to the copia elements (pseudoviridae).</text>
</comment>
<comment type="miscellaneous">
    <molecule>Isoform Transposon Ty1-PL Gag-Pol polyprotein</molecule>
    <text>Produced by +1 ribosomal frameshifting between codon Leu-435 and Gly-436 of the YPL257W-A ORF.</text>
</comment>
<evidence type="ECO:0000250" key="1"/>
<evidence type="ECO:0000250" key="2">
    <source>
        <dbReference type="UniProtKB" id="Q99231"/>
    </source>
</evidence>
<evidence type="ECO:0000255" key="3">
    <source>
        <dbReference type="PROSITE-ProRule" id="PRU00457"/>
    </source>
</evidence>
<evidence type="ECO:0000255" key="4">
    <source>
        <dbReference type="PROSITE-ProRule" id="PRU10094"/>
    </source>
</evidence>
<evidence type="ECO:0000256" key="5">
    <source>
        <dbReference type="SAM" id="MobiDB-lite"/>
    </source>
</evidence>
<proteinExistence type="inferred from homology"/>
<sequence length="1755" mass="198576">MESQQLSQHSPISHGSACASVTSKEVHTNQDPLDVSASKTEECEKASTKANSQQTTTPASSAVPENPHHASPQPASVPPPQNGPYPQQCMMTQNQANPSGWSFYGHPSMIPYTPYQMSPMYFPPGPQSQFPQYPSSVGTPLSTPSPESGNTFTDSSSADSDMTSTKKYVRPPPMLTSPNDFPNWVKTYIKFLQNSNLGGIIPTVNGKPVRQITDDELTFLYNTFQIFAPSQFLPTWVKDILSVDYTDIMKILSKSIEKMQSDTQEANDIVTLANLQYNGSTPADAFETKVTNIIDRLNNNGIHINNKVACQLIMRGLSGEYKFLRYTRHRHLNMTVAELFLDIHAIYEEQQGSRNSKPNYRRNLSDEKNDSRSYTNTTKPKVIARNPQKTNNSKSKTARAHNVSTSNNSPSTDNDSISKSTTEPIQLNNKHDLHLGQELTESTVNHTNHSDDELPGHLLLDSGASRTLIRSAHHIHSASSNPDINVVDAQKRNIPINAIGDLQFHFQDNTKTSIKVLHTPNIAYDLLSLNELAAVDITACFTKNVLERSDGTVLAPIVKYGDFYWVSKKYLLPSNISVPTINNVHTSESTRKYPYPFIHRMLAHANAQTIRYSLKNNTITYFNESDVDWSSAIDYQCPDCLIGKSTKHRHIKGSRLKYQNSYEPFQYLHTDIFGPVHNLPNSAPSYFISFTDETTKFRWVYPLHDRREDSILDVFTTILAFIKNQFQASVLVIQMDRGSEYTNRTLHKFLEKNGITPCYTTTADSRAHGVAERLNRTLLDDCRTQLQCSGLPNHLWFSAIEFSTIVRNSLASPKSKKSARQHAGLAGLDISTLLPFGQPVIVNDHNPNSKIHPRGIPGYALHPSRNSYGYIIYLPSLKKTVDTTNYVILQGKESRLDQFNYDALTFDEDLNRLTASYHSFIASNEIQESNDLNIESDHDFQSDIELHPEQPRNVLSKAVSPTDSTPPSTHTEDSKRVSKTNIRAPREVDPNISESNILPSKKRSSTPQISNIESTGSGGMHKLNVPLLAPMSQSNTHESSHASKSKDFRHSDSYSENETNHTNVPISSTGGTNNKTVPQISDQETEKRIIHRSPSIDASPPENNSSHNIVPIKTPTTVSEQNTEESIIADLPLPDLPPESPTEFPDPFKELPPINSRQTNSSLGGIGDSNAYTTINSKKRSLEDNETEIKVSRDTWNTKNMRSLEPPRSKKRIHLIAAVKAVKSIKPIRTTLRYDEAITYNKDIKEKEKYIEAYHKEVNQLLKMKTWDTDEYYDRKEIDPKRVINSMFIFNKKRDGTHKARFVARGDIQHPDTYDSGMQSNTVHHYALMTSLSLALDNNYYITQLDISSAYLYADIKEELYIRPPPHLGMNDKLIRLKKSLYGLKQSGANWYETIKSYLIKQCGMEEVRGWSCVFKNSQVTICLFVDDMILFSKDLNANKKIITTLKKQYDTKIINLGESDNEIQYDILGLEIKYQRGKYMKLGMENSLTEKIPKLNVPLNPKGRKLSAPGQPGLYIDQDELEIDEDEYKEKVHEMQKLIGLASYVGYKFRFDLLYYINTLAQHILFPSRQVLDMTYELIQFMWDTRDKQLIWHKNKPTEPDNKLVAISDASYGNQPYYKSQIGNIYLLNGKVIGGKSTKASLTCTSTTEAEIHAISESVPLLNNLSYLIQELNKKPIIKGLLTDSRSTISIIKSTNEEKFRNRFFGTKAMRLRDEVSGNNLYVYYIETKKNIADVMTKPLPIKTFKLLTNKWIH</sequence>
<protein>
    <recommendedName>
        <fullName>Transposon Ty1-PL Gag-Pol polyprotein</fullName>
    </recommendedName>
    <alternativeName>
        <fullName>Gag-Pol-p199</fullName>
    </alternativeName>
    <alternativeName>
        <fullName>TY1A-TY1B</fullName>
    </alternativeName>
    <alternativeName>
        <fullName>Transposon Ty1 TYA-TYB polyprotein</fullName>
    </alternativeName>
    <alternativeName>
        <fullName>p190</fullName>
    </alternativeName>
    <component>
        <recommendedName>
            <fullName>Capsid protein</fullName>
            <shortName>CA</shortName>
        </recommendedName>
        <alternativeName>
            <fullName>Gag-p45</fullName>
        </alternativeName>
        <alternativeName>
            <fullName>p54</fullName>
        </alternativeName>
    </component>
    <component>
        <recommendedName>
            <fullName>Ty1 protease</fullName>
            <shortName>PR</shortName>
            <ecNumber>3.4.23.-</ecNumber>
        </recommendedName>
        <alternativeName>
            <fullName>Pol-p20</fullName>
        </alternativeName>
        <alternativeName>
            <fullName>p23</fullName>
        </alternativeName>
    </component>
    <component>
        <recommendedName>
            <fullName>Integrase</fullName>
            <shortName>IN</shortName>
        </recommendedName>
        <alternativeName>
            <fullName>Pol-p71</fullName>
        </alternativeName>
        <alternativeName>
            <fullName>p84</fullName>
        </alternativeName>
        <alternativeName>
            <fullName>p90</fullName>
        </alternativeName>
    </component>
    <component>
        <recommendedName>
            <fullName>Reverse transcriptase/ribonuclease H</fullName>
            <shortName>RT</shortName>
            <shortName>RT-RH</shortName>
            <ecNumber>2.7.7.49</ecNumber>
            <ecNumber>2.7.7.7</ecNumber>
            <ecNumber>3.1.26.4</ecNumber>
        </recommendedName>
        <alternativeName>
            <fullName>Pol-p63</fullName>
        </alternativeName>
        <alternativeName>
            <fullName>p60</fullName>
        </alternativeName>
    </component>
</protein>
<accession>Q12414</accession>
<accession>D6W3B2</accession>
<organism>
    <name type="scientific">Saccharomyces cerevisiae (strain ATCC 204508 / S288c)</name>
    <name type="common">Baker's yeast</name>
    <dbReference type="NCBI Taxonomy" id="559292"/>
    <lineage>
        <taxon>Eukaryota</taxon>
        <taxon>Fungi</taxon>
        <taxon>Dikarya</taxon>
        <taxon>Ascomycota</taxon>
        <taxon>Saccharomycotina</taxon>
        <taxon>Saccharomycetes</taxon>
        <taxon>Saccharomycetales</taxon>
        <taxon>Saccharomycetaceae</taxon>
        <taxon>Saccharomyces</taxon>
    </lineage>
</organism>
<feature type="chain" id="PRO_0000279169" description="Transposon Ty1-PL Gag-Pol polyprotein">
    <location>
        <begin position="1"/>
        <end position="1755"/>
    </location>
</feature>
<feature type="chain" id="PRO_0000279170" description="Capsid protein" evidence="1">
    <location>
        <begin position="1"/>
        <end position="401"/>
    </location>
</feature>
<feature type="chain" id="PRO_0000279171" description="Ty1 protease" evidence="1">
    <location>
        <begin position="402"/>
        <end position="582"/>
    </location>
</feature>
<feature type="chain" id="PRO_0000279172" description="Integrase" evidence="1">
    <location>
        <begin position="583"/>
        <end position="1217"/>
    </location>
</feature>
<feature type="chain" id="PRO_0000279173" description="Reverse transcriptase/ribonuclease H" evidence="1">
    <location>
        <begin position="1218"/>
        <end position="1755"/>
    </location>
</feature>
<feature type="domain" description="Integrase catalytic" evidence="3">
    <location>
        <begin position="660"/>
        <end position="835"/>
    </location>
</feature>
<feature type="domain" description="Reverse transcriptase Ty1/copia-type">
    <location>
        <begin position="1338"/>
        <end position="1476"/>
    </location>
</feature>
<feature type="domain" description="RNase H Ty1/copia-type">
    <location>
        <begin position="1610"/>
        <end position="1752"/>
    </location>
</feature>
<feature type="region of interest" description="Disordered" evidence="5">
    <location>
        <begin position="1"/>
        <end position="93"/>
    </location>
</feature>
<feature type="region of interest" description="Disordered" evidence="5">
    <location>
        <begin position="126"/>
        <end position="174"/>
    </location>
</feature>
<feature type="region of interest" description="RNA-binding" evidence="1">
    <location>
        <begin position="299"/>
        <end position="401"/>
    </location>
</feature>
<feature type="region of interest" description="Disordered" evidence="5">
    <location>
        <begin position="352"/>
        <end position="421"/>
    </location>
</feature>
<feature type="region of interest" description="Integrase-type zinc finger-like">
    <location>
        <begin position="583"/>
        <end position="640"/>
    </location>
</feature>
<feature type="region of interest" description="Disordered" evidence="5">
    <location>
        <begin position="956"/>
        <end position="1087"/>
    </location>
</feature>
<feature type="region of interest" description="Disordered" evidence="5">
    <location>
        <begin position="1092"/>
        <end position="1111"/>
    </location>
</feature>
<feature type="region of interest" description="Disordered" evidence="5">
    <location>
        <begin position="1130"/>
        <end position="1187"/>
    </location>
</feature>
<feature type="short sequence motif" description="Bipartite nuclear localization signal" evidence="1">
    <location>
        <begin position="1178"/>
        <end position="1212"/>
    </location>
</feature>
<feature type="compositionally biased region" description="Polar residues" evidence="5">
    <location>
        <begin position="1"/>
        <end position="23"/>
    </location>
</feature>
<feature type="compositionally biased region" description="Polar residues" evidence="5">
    <location>
        <begin position="48"/>
        <end position="60"/>
    </location>
</feature>
<feature type="compositionally biased region" description="Polar residues" evidence="5">
    <location>
        <begin position="127"/>
        <end position="152"/>
    </location>
</feature>
<feature type="compositionally biased region" description="Low complexity" evidence="5">
    <location>
        <begin position="153"/>
        <end position="165"/>
    </location>
</feature>
<feature type="compositionally biased region" description="Low complexity" evidence="5">
    <location>
        <begin position="402"/>
        <end position="418"/>
    </location>
</feature>
<feature type="compositionally biased region" description="Low complexity" evidence="5">
    <location>
        <begin position="960"/>
        <end position="969"/>
    </location>
</feature>
<feature type="compositionally biased region" description="Polar residues" evidence="5">
    <location>
        <begin position="1005"/>
        <end position="1015"/>
    </location>
</feature>
<feature type="compositionally biased region" description="Basic and acidic residues" evidence="5">
    <location>
        <begin position="1038"/>
        <end position="1053"/>
    </location>
</feature>
<feature type="compositionally biased region" description="Polar residues" evidence="5">
    <location>
        <begin position="1054"/>
        <end position="1082"/>
    </location>
</feature>
<feature type="compositionally biased region" description="Polar residues" evidence="5">
    <location>
        <begin position="1101"/>
        <end position="1111"/>
    </location>
</feature>
<feature type="active site" description="For protease activity; shared with dimeric partner" evidence="4">
    <location>
        <position position="461"/>
    </location>
</feature>
<feature type="binding site" evidence="3">
    <location>
        <position position="671"/>
    </location>
    <ligand>
        <name>Mg(2+)</name>
        <dbReference type="ChEBI" id="CHEBI:18420"/>
        <label>1</label>
        <note>catalytic; for integrase activity</note>
    </ligand>
</feature>
<feature type="binding site" evidence="3">
    <location>
        <position position="736"/>
    </location>
    <ligand>
        <name>Mg(2+)</name>
        <dbReference type="ChEBI" id="CHEBI:18420"/>
        <label>1</label>
        <note>catalytic; for integrase activity</note>
    </ligand>
</feature>
<feature type="binding site" evidence="3">
    <location>
        <position position="1346"/>
    </location>
    <ligand>
        <name>Mg(2+)</name>
        <dbReference type="ChEBI" id="CHEBI:18420"/>
        <label>2</label>
        <note>catalytic; for reverse transcriptase activity</note>
    </ligand>
</feature>
<feature type="binding site" evidence="3">
    <location>
        <position position="1427"/>
    </location>
    <ligand>
        <name>Mg(2+)</name>
        <dbReference type="ChEBI" id="CHEBI:18420"/>
        <label>2</label>
        <note>catalytic; for reverse transcriptase activity</note>
    </ligand>
</feature>
<feature type="binding site" evidence="3">
    <location>
        <position position="1428"/>
    </location>
    <ligand>
        <name>Mg(2+)</name>
        <dbReference type="ChEBI" id="CHEBI:18420"/>
        <label>2</label>
        <note>catalytic; for reverse transcriptase activity</note>
    </ligand>
</feature>
<feature type="binding site" evidence="3">
    <location>
        <position position="1610"/>
    </location>
    <ligand>
        <name>Mg(2+)</name>
        <dbReference type="ChEBI" id="CHEBI:18420"/>
        <label>3</label>
        <note>catalytic; for RNase H activity</note>
    </ligand>
</feature>
<feature type="binding site" evidence="3">
    <location>
        <position position="1652"/>
    </location>
    <ligand>
        <name>Mg(2+)</name>
        <dbReference type="ChEBI" id="CHEBI:18420"/>
        <label>3</label>
        <note>catalytic; for RNase H activity</note>
    </ligand>
</feature>
<feature type="binding site" evidence="3">
    <location>
        <position position="1685"/>
    </location>
    <ligand>
        <name>Mg(2+)</name>
        <dbReference type="ChEBI" id="CHEBI:18420"/>
        <label>3</label>
        <note>catalytic; for RNase H activity</note>
    </ligand>
</feature>
<feature type="site" description="Cleavage; by Ty1 protease" evidence="1">
    <location>
        <begin position="401"/>
        <end position="402"/>
    </location>
</feature>
<feature type="site" description="Cleavage; by Ty1 protease" evidence="1">
    <location>
        <begin position="582"/>
        <end position="583"/>
    </location>
</feature>
<feature type="site" description="Cleavage; by Ty1 protease" evidence="1">
    <location>
        <begin position="1217"/>
        <end position="1218"/>
    </location>
</feature>
<feature type="modified residue" description="Phosphoserine" evidence="2">
    <location>
        <position position="416"/>
    </location>
</feature>
<keyword id="KW-0064">Aspartyl protease</keyword>
<keyword id="KW-0067">ATP-binding</keyword>
<keyword id="KW-0963">Cytoplasm</keyword>
<keyword id="KW-0229">DNA integration</keyword>
<keyword id="KW-0233">DNA recombination</keyword>
<keyword id="KW-0238">DNA-binding</keyword>
<keyword id="KW-0239">DNA-directed DNA polymerase</keyword>
<keyword id="KW-0255">Endonuclease</keyword>
<keyword id="KW-0378">Hydrolase</keyword>
<keyword id="KW-0460">Magnesium</keyword>
<keyword id="KW-0479">Metal-binding</keyword>
<keyword id="KW-0511">Multifunctional enzyme</keyword>
<keyword id="KW-0540">Nuclease</keyword>
<keyword id="KW-0547">Nucleotide-binding</keyword>
<keyword id="KW-0548">Nucleotidyltransferase</keyword>
<keyword id="KW-0539">Nucleus</keyword>
<keyword id="KW-0597">Phosphoprotein</keyword>
<keyword id="KW-0645">Protease</keyword>
<keyword id="KW-1185">Reference proteome</keyword>
<keyword id="KW-0688">Ribosomal frameshifting</keyword>
<keyword id="KW-0694">RNA-binding</keyword>
<keyword id="KW-0695">RNA-directed DNA polymerase</keyword>
<keyword id="KW-0808">Transferase</keyword>
<keyword id="KW-0814">Transposable element</keyword>
<keyword id="KW-0815">Transposition</keyword>
<keyword id="KW-1188">Viral release from host cell</keyword>
<keyword id="KW-0917">Virion maturation</keyword>
<keyword id="KW-0862">Zinc</keyword>
<keyword id="KW-0863">Zinc-finger</keyword>
<gene>
    <name type="primary">TY1B-PL</name>
    <name type="synonym">YPLWTy1-1 POL</name>
    <name type="ordered locus">YPL257W-B</name>
    <name type="ORF">P0729</name>
</gene>
<name>YP11B_YEAST</name>
<reference key="1">
    <citation type="journal article" date="1997" name="Nature">
        <title>The nucleotide sequence of Saccharomyces cerevisiae chromosome XVI.</title>
        <authorList>
            <person name="Bussey H."/>
            <person name="Storms R.K."/>
            <person name="Ahmed A."/>
            <person name="Albermann K."/>
            <person name="Allen E."/>
            <person name="Ansorge W."/>
            <person name="Araujo R."/>
            <person name="Aparicio A."/>
            <person name="Barrell B.G."/>
            <person name="Badcock K."/>
            <person name="Benes V."/>
            <person name="Botstein D."/>
            <person name="Bowman S."/>
            <person name="Brueckner M."/>
            <person name="Carpenter J."/>
            <person name="Cherry J.M."/>
            <person name="Chung E."/>
            <person name="Churcher C.M."/>
            <person name="Coster F."/>
            <person name="Davis K."/>
            <person name="Davis R.W."/>
            <person name="Dietrich F.S."/>
            <person name="Delius H."/>
            <person name="DiPaolo T."/>
            <person name="Dubois E."/>
            <person name="Duesterhoeft A."/>
            <person name="Duncan M."/>
            <person name="Floeth M."/>
            <person name="Fortin N."/>
            <person name="Friesen J.D."/>
            <person name="Fritz C."/>
            <person name="Goffeau A."/>
            <person name="Hall J."/>
            <person name="Hebling U."/>
            <person name="Heumann K."/>
            <person name="Hilbert H."/>
            <person name="Hillier L.W."/>
            <person name="Hunicke-Smith S."/>
            <person name="Hyman R.W."/>
            <person name="Johnston M."/>
            <person name="Kalman S."/>
            <person name="Kleine K."/>
            <person name="Komp C."/>
            <person name="Kurdi O."/>
            <person name="Lashkari D."/>
            <person name="Lew H."/>
            <person name="Lin A."/>
            <person name="Lin D."/>
            <person name="Louis E.J."/>
            <person name="Marathe R."/>
            <person name="Messenguy F."/>
            <person name="Mewes H.-W."/>
            <person name="Mirtipati S."/>
            <person name="Moestl D."/>
            <person name="Mueller-Auer S."/>
            <person name="Namath A."/>
            <person name="Nentwich U."/>
            <person name="Oefner P."/>
            <person name="Pearson D."/>
            <person name="Petel F.X."/>
            <person name="Pohl T.M."/>
            <person name="Purnelle B."/>
            <person name="Rajandream M.A."/>
            <person name="Rechmann S."/>
            <person name="Rieger M."/>
            <person name="Riles L."/>
            <person name="Roberts D."/>
            <person name="Schaefer M."/>
            <person name="Scharfe M."/>
            <person name="Scherens B."/>
            <person name="Schramm S."/>
            <person name="Schroeder M."/>
            <person name="Sdicu A.-M."/>
            <person name="Tettelin H."/>
            <person name="Urrestarazu L.A."/>
            <person name="Ushinsky S."/>
            <person name="Vierendeels F."/>
            <person name="Vissers S."/>
            <person name="Voss H."/>
            <person name="Walsh S.V."/>
            <person name="Wambutt R."/>
            <person name="Wang Y."/>
            <person name="Wedler E."/>
            <person name="Wedler H."/>
            <person name="Winnett E."/>
            <person name="Zhong W.-W."/>
            <person name="Zollner A."/>
            <person name="Vo D.H."/>
            <person name="Hani J."/>
        </authorList>
    </citation>
    <scope>NUCLEOTIDE SEQUENCE [LARGE SCALE GENOMIC DNA]</scope>
    <source>
        <strain>ATCC 204508 / S288c</strain>
    </source>
</reference>
<reference key="2">
    <citation type="journal article" date="2014" name="G3 (Bethesda)">
        <title>The reference genome sequence of Saccharomyces cerevisiae: Then and now.</title>
        <authorList>
            <person name="Engel S.R."/>
            <person name="Dietrich F.S."/>
            <person name="Fisk D.G."/>
            <person name="Binkley G."/>
            <person name="Balakrishnan R."/>
            <person name="Costanzo M.C."/>
            <person name="Dwight S.S."/>
            <person name="Hitz B.C."/>
            <person name="Karra K."/>
            <person name="Nash R.S."/>
            <person name="Weng S."/>
            <person name="Wong E.D."/>
            <person name="Lloyd P."/>
            <person name="Skrzypek M.S."/>
            <person name="Miyasato S.R."/>
            <person name="Simison M."/>
            <person name="Cherry J.M."/>
        </authorList>
    </citation>
    <scope>GENOME REANNOTATION</scope>
    <source>
        <strain>ATCC 204508 / S288c</strain>
    </source>
</reference>
<reference key="3">
    <citation type="journal article" date="1998" name="Genome Res.">
        <title>Transposable elements and genome organization: a comprehensive survey of retrotransposons revealed by the complete Saccharomyces cerevisiae genome sequence.</title>
        <authorList>
            <person name="Kim J.M."/>
            <person name="Vanguri S."/>
            <person name="Boeke J.D."/>
            <person name="Gabriel A."/>
            <person name="Voytas D.F."/>
        </authorList>
    </citation>
    <scope>NOMENCLATURE</scope>
</reference>
<reference key="4">
    <citation type="journal article" date="2005" name="Cytogenet. Genome Res.">
        <title>Happy together: the life and times of Ty retrotransposons and their hosts.</title>
        <authorList>
            <person name="Lesage P."/>
            <person name="Todeschini A.L."/>
        </authorList>
    </citation>
    <scope>REVIEW</scope>
</reference>
<reference key="5">
    <citation type="journal article" date="2005" name="Cytogenet. Genome Res.">
        <title>Reverse transcriptase and integrase of the Saccharomyces cerevisiae Ty1 element.</title>
        <authorList>
            <person name="Wilhelm F.-X."/>
            <person name="Wilhelm M."/>
            <person name="Gabriel A."/>
        </authorList>
    </citation>
    <scope>REVIEW</scope>
    <scope>DOMAINS</scope>
</reference>
<dbReference type="EC" id="3.4.23.-"/>
<dbReference type="EC" id="2.7.7.49"/>
<dbReference type="EC" id="2.7.7.7"/>
<dbReference type="EC" id="3.1.26.4"/>
<dbReference type="EMBL" id="Z73613">
    <property type="protein sequence ID" value="CAA97984.1"/>
    <property type="molecule type" value="Genomic_DNA"/>
</dbReference>
<dbReference type="EMBL" id="Z73614">
    <property type="protein sequence ID" value="CAA97988.1"/>
    <property type="molecule type" value="Genomic_DNA"/>
</dbReference>
<dbReference type="EMBL" id="BK006949">
    <property type="protein sequence ID" value="DAA11178.1"/>
    <property type="molecule type" value="Genomic_DNA"/>
</dbReference>
<dbReference type="PIR" id="S69979">
    <property type="entry name" value="S69979"/>
</dbReference>
<dbReference type="RefSeq" id="NP_058189.1">
    <molecule id="Q12414-1"/>
    <property type="nucleotide sequence ID" value="NM_001184392.2"/>
</dbReference>
<dbReference type="SMR" id="Q12414"/>
<dbReference type="BioGRID" id="35905">
    <property type="interactions" value="7"/>
</dbReference>
<dbReference type="DIP" id="DIP-8957N"/>
<dbReference type="FunCoup" id="Q12414">
    <property type="interactions" value="117"/>
</dbReference>
<dbReference type="IntAct" id="Q12414">
    <property type="interactions" value="1"/>
</dbReference>
<dbReference type="GlyGen" id="Q12414">
    <property type="glycosylation" value="3 sites"/>
</dbReference>
<dbReference type="PaxDb" id="4932-YPL257W-B"/>
<dbReference type="PeptideAtlas" id="Q12414"/>
<dbReference type="GeneID" id="855817"/>
<dbReference type="KEGG" id="sce:YPL257W-B"/>
<dbReference type="AGR" id="SGD:S000007358"/>
<dbReference type="SGD" id="S000007358">
    <property type="gene designation" value="YPL257W-B"/>
</dbReference>
<dbReference type="VEuPathDB" id="FungiDB:YPL257W-B"/>
<dbReference type="eggNOG" id="KOG0017">
    <property type="taxonomic scope" value="Eukaryota"/>
</dbReference>
<dbReference type="HOGENOM" id="CLU_244151_0_0_1"/>
<dbReference type="InParanoid" id="Q12414"/>
<dbReference type="OrthoDB" id="5423336at2759"/>
<dbReference type="Proteomes" id="UP000002311">
    <property type="component" value="Chromosome XVI"/>
</dbReference>
<dbReference type="RNAct" id="Q12414">
    <property type="molecule type" value="protein"/>
</dbReference>
<dbReference type="GO" id="GO:0005737">
    <property type="term" value="C:cytoplasm"/>
    <property type="evidence" value="ECO:0007669"/>
    <property type="project" value="UniProtKB-SubCell"/>
</dbReference>
<dbReference type="GO" id="GO:0005634">
    <property type="term" value="C:nucleus"/>
    <property type="evidence" value="ECO:0000314"/>
    <property type="project" value="SGD"/>
</dbReference>
<dbReference type="GO" id="GO:0004190">
    <property type="term" value="F:aspartic-type endopeptidase activity"/>
    <property type="evidence" value="ECO:0007669"/>
    <property type="project" value="UniProtKB-KW"/>
</dbReference>
<dbReference type="GO" id="GO:0005524">
    <property type="term" value="F:ATP binding"/>
    <property type="evidence" value="ECO:0007669"/>
    <property type="project" value="UniProtKB-KW"/>
</dbReference>
<dbReference type="GO" id="GO:0003677">
    <property type="term" value="F:DNA binding"/>
    <property type="evidence" value="ECO:0007669"/>
    <property type="project" value="UniProtKB-KW"/>
</dbReference>
<dbReference type="GO" id="GO:0003887">
    <property type="term" value="F:DNA-directed DNA polymerase activity"/>
    <property type="evidence" value="ECO:0007669"/>
    <property type="project" value="UniProtKB-KW"/>
</dbReference>
<dbReference type="GO" id="GO:0003723">
    <property type="term" value="F:RNA binding"/>
    <property type="evidence" value="ECO:0007669"/>
    <property type="project" value="UniProtKB-KW"/>
</dbReference>
<dbReference type="GO" id="GO:0003964">
    <property type="term" value="F:RNA-directed DNA polymerase activity"/>
    <property type="evidence" value="ECO:0007669"/>
    <property type="project" value="UniProtKB-KW"/>
</dbReference>
<dbReference type="GO" id="GO:0004523">
    <property type="term" value="F:RNA-DNA hybrid ribonuclease activity"/>
    <property type="evidence" value="ECO:0007669"/>
    <property type="project" value="UniProtKB-EC"/>
</dbReference>
<dbReference type="GO" id="GO:0008270">
    <property type="term" value="F:zinc ion binding"/>
    <property type="evidence" value="ECO:0007669"/>
    <property type="project" value="UniProtKB-KW"/>
</dbReference>
<dbReference type="GO" id="GO:0015074">
    <property type="term" value="P:DNA integration"/>
    <property type="evidence" value="ECO:0007669"/>
    <property type="project" value="UniProtKB-KW"/>
</dbReference>
<dbReference type="GO" id="GO:0006310">
    <property type="term" value="P:DNA recombination"/>
    <property type="evidence" value="ECO:0007669"/>
    <property type="project" value="UniProtKB-KW"/>
</dbReference>
<dbReference type="GO" id="GO:0006508">
    <property type="term" value="P:proteolysis"/>
    <property type="evidence" value="ECO:0007669"/>
    <property type="project" value="UniProtKB-KW"/>
</dbReference>
<dbReference type="GO" id="GO:0032196">
    <property type="term" value="P:transposition"/>
    <property type="evidence" value="ECO:0007669"/>
    <property type="project" value="UniProtKB-KW"/>
</dbReference>
<dbReference type="GO" id="GO:0075523">
    <property type="term" value="P:viral translational frameshifting"/>
    <property type="evidence" value="ECO:0007669"/>
    <property type="project" value="UniProtKB-KW"/>
</dbReference>
<dbReference type="CDD" id="cd09272">
    <property type="entry name" value="RNase_HI_RT_Ty1"/>
    <property type="match status" value="1"/>
</dbReference>
<dbReference type="FunFam" id="3.30.420.10:FF:000050">
    <property type="entry name" value="Transposon Ty2-DR3 Gag-Pol polyprotein"/>
    <property type="match status" value="1"/>
</dbReference>
<dbReference type="Gene3D" id="3.30.420.10">
    <property type="entry name" value="Ribonuclease H-like superfamily/Ribonuclease H"/>
    <property type="match status" value="1"/>
</dbReference>
<dbReference type="InterPro" id="IPR001969">
    <property type="entry name" value="Aspartic_peptidase_AS"/>
</dbReference>
<dbReference type="InterPro" id="IPR043502">
    <property type="entry name" value="DNA/RNA_pol_sf"/>
</dbReference>
<dbReference type="InterPro" id="IPR001584">
    <property type="entry name" value="Integrase_cat-core"/>
</dbReference>
<dbReference type="InterPro" id="IPR039537">
    <property type="entry name" value="Retrotran_Ty1/copia-like"/>
</dbReference>
<dbReference type="InterPro" id="IPR012337">
    <property type="entry name" value="RNaseH-like_sf"/>
</dbReference>
<dbReference type="InterPro" id="IPR036397">
    <property type="entry name" value="RNaseH_sf"/>
</dbReference>
<dbReference type="InterPro" id="IPR013103">
    <property type="entry name" value="RVT_2"/>
</dbReference>
<dbReference type="InterPro" id="IPR015820">
    <property type="entry name" value="TYA"/>
</dbReference>
<dbReference type="PANTHER" id="PTHR42648">
    <property type="entry name" value="TRANSPOSASE, PUTATIVE-RELATED"/>
    <property type="match status" value="1"/>
</dbReference>
<dbReference type="PANTHER" id="PTHR42648:SF11">
    <property type="entry name" value="TRANSPOSON TY4-P GAG-POL POLYPROTEIN"/>
    <property type="match status" value="1"/>
</dbReference>
<dbReference type="Pfam" id="PF00665">
    <property type="entry name" value="rve"/>
    <property type="match status" value="1"/>
</dbReference>
<dbReference type="Pfam" id="PF07727">
    <property type="entry name" value="RVT_2"/>
    <property type="match status" value="1"/>
</dbReference>
<dbReference type="Pfam" id="PF01021">
    <property type="entry name" value="TYA"/>
    <property type="match status" value="1"/>
</dbReference>
<dbReference type="SUPFAM" id="SSF56672">
    <property type="entry name" value="DNA/RNA polymerases"/>
    <property type="match status" value="1"/>
</dbReference>
<dbReference type="SUPFAM" id="SSF53098">
    <property type="entry name" value="Ribonuclease H-like"/>
    <property type="match status" value="1"/>
</dbReference>
<dbReference type="PROSITE" id="PS00141">
    <property type="entry name" value="ASP_PROTEASE"/>
    <property type="match status" value="1"/>
</dbReference>
<dbReference type="PROSITE" id="PS50994">
    <property type="entry name" value="INTEGRASE"/>
    <property type="match status" value="1"/>
</dbReference>